<organism>
    <name type="scientific">Azorhizobium caulinodans (strain ATCC 43989 / DSM 5975 / JCM 20966 / LMG 6465 / NBRC 14845 / NCIMB 13405 / ORS 571)</name>
    <dbReference type="NCBI Taxonomy" id="438753"/>
    <lineage>
        <taxon>Bacteria</taxon>
        <taxon>Pseudomonadati</taxon>
        <taxon>Pseudomonadota</taxon>
        <taxon>Alphaproteobacteria</taxon>
        <taxon>Hyphomicrobiales</taxon>
        <taxon>Xanthobacteraceae</taxon>
        <taxon>Azorhizobium</taxon>
    </lineage>
</organism>
<sequence length="625" mass="67052">MTIRRLPPVLIDRIAAGEVVERPAAAVKELVENAIDAGATEIEVLVVGGGREMIRISDNGSGMSADELSLAVERHATSKLPTEDLLAISTLGFRGEALPSIGAVARLSIASRPKSAPHAFEIRVEGGVVTPPRPAALNGGTRVEVRDLFFATPARLKFLKSDRAEAAAAADVVRRLALARPDVAFTLMTDDRQPLTWVARSMDEAGRAARVADVLGAEAGRNLIPVVGERGGVRLVGLAGLPTYSKANSLSQFLFVNGRPVRDKLLMGALRAAYSDLLPSDRYPVLALFLSLDPREVDVNVHPAKTEVRFRDGGNVRALLVRTLTDALAARVPSTAGTIADRLVELARTPELEPARPAAAIPEFRPYRAEPMPAGGYDWRASPARPLNVAEPDGALEAEMESFAEAVQASFDVGMPAADARADAAVPETGDLDRPLGAARAQLHETYIVAQTREGMVLVDQHAAHERLVYEKLKAALERDGVARQGLLVPAVVDLDPAEADRLAERAGDLAALGLVIEPFGIGAVLVREVPALLAKADVTKLVRDVAEHSAEWDDALPLERRLLHVAATMACHGSVRAGRRLRVEEMNALLREMEETPNAGECNHGRPTFITLSLKDVEKLFARR</sequence>
<feature type="chain" id="PRO_1000071503" description="DNA mismatch repair protein MutL">
    <location>
        <begin position="1"/>
        <end position="625"/>
    </location>
</feature>
<reference key="1">
    <citation type="submission" date="2007-04" db="EMBL/GenBank/DDBJ databases">
        <title>Complete genome sequence of the nitrogen-fixing bacterium Azorhizobium caulinodans ORS571.</title>
        <authorList>
            <person name="Lee K.B."/>
            <person name="Backer P.D."/>
            <person name="Aono T."/>
            <person name="Liu C.T."/>
            <person name="Suzuki S."/>
            <person name="Suzuki T."/>
            <person name="Kaneko T."/>
            <person name="Yamada M."/>
            <person name="Tabata S."/>
            <person name="Kupfer D.M."/>
            <person name="Najar F.Z."/>
            <person name="Wiley G.B."/>
            <person name="Roe B."/>
            <person name="Binnewies T."/>
            <person name="Ussery D."/>
            <person name="Vereecke D."/>
            <person name="Gevers D."/>
            <person name="Holsters M."/>
            <person name="Oyaizu H."/>
        </authorList>
    </citation>
    <scope>NUCLEOTIDE SEQUENCE [LARGE SCALE GENOMIC DNA]</scope>
    <source>
        <strain>ATCC 43989 / DSM 5975 / JCM 20966 / LMG 6465 / NBRC 14845 / NCIMB 13405 / ORS 571</strain>
    </source>
</reference>
<keyword id="KW-0227">DNA damage</keyword>
<keyword id="KW-0234">DNA repair</keyword>
<keyword id="KW-1185">Reference proteome</keyword>
<dbReference type="EMBL" id="AP009384">
    <property type="protein sequence ID" value="BAF88391.1"/>
    <property type="molecule type" value="Genomic_DNA"/>
</dbReference>
<dbReference type="RefSeq" id="WP_012170919.1">
    <property type="nucleotide sequence ID" value="NC_009937.1"/>
</dbReference>
<dbReference type="SMR" id="A8I6D2"/>
<dbReference type="STRING" id="438753.AZC_2393"/>
<dbReference type="KEGG" id="azc:AZC_2393"/>
<dbReference type="eggNOG" id="COG0323">
    <property type="taxonomic scope" value="Bacteria"/>
</dbReference>
<dbReference type="HOGENOM" id="CLU_004131_4_2_5"/>
<dbReference type="Proteomes" id="UP000000270">
    <property type="component" value="Chromosome"/>
</dbReference>
<dbReference type="GO" id="GO:0032300">
    <property type="term" value="C:mismatch repair complex"/>
    <property type="evidence" value="ECO:0007669"/>
    <property type="project" value="InterPro"/>
</dbReference>
<dbReference type="GO" id="GO:0005524">
    <property type="term" value="F:ATP binding"/>
    <property type="evidence" value="ECO:0007669"/>
    <property type="project" value="InterPro"/>
</dbReference>
<dbReference type="GO" id="GO:0016887">
    <property type="term" value="F:ATP hydrolysis activity"/>
    <property type="evidence" value="ECO:0007669"/>
    <property type="project" value="InterPro"/>
</dbReference>
<dbReference type="GO" id="GO:0140664">
    <property type="term" value="F:ATP-dependent DNA damage sensor activity"/>
    <property type="evidence" value="ECO:0007669"/>
    <property type="project" value="InterPro"/>
</dbReference>
<dbReference type="GO" id="GO:0030983">
    <property type="term" value="F:mismatched DNA binding"/>
    <property type="evidence" value="ECO:0007669"/>
    <property type="project" value="InterPro"/>
</dbReference>
<dbReference type="GO" id="GO:0006298">
    <property type="term" value="P:mismatch repair"/>
    <property type="evidence" value="ECO:0007669"/>
    <property type="project" value="UniProtKB-UniRule"/>
</dbReference>
<dbReference type="CDD" id="cd16926">
    <property type="entry name" value="HATPase_MutL-MLH-PMS-like"/>
    <property type="match status" value="1"/>
</dbReference>
<dbReference type="CDD" id="cd00782">
    <property type="entry name" value="MutL_Trans"/>
    <property type="match status" value="1"/>
</dbReference>
<dbReference type="FunFam" id="3.30.565.10:FF:000003">
    <property type="entry name" value="DNA mismatch repair endonuclease MutL"/>
    <property type="match status" value="1"/>
</dbReference>
<dbReference type="Gene3D" id="3.30.230.10">
    <property type="match status" value="1"/>
</dbReference>
<dbReference type="Gene3D" id="3.30.565.10">
    <property type="entry name" value="Histidine kinase-like ATPase, C-terminal domain"/>
    <property type="match status" value="1"/>
</dbReference>
<dbReference type="Gene3D" id="3.30.1540.20">
    <property type="entry name" value="MutL, C-terminal domain, dimerisation subdomain"/>
    <property type="match status" value="1"/>
</dbReference>
<dbReference type="Gene3D" id="3.30.1370.100">
    <property type="entry name" value="MutL, C-terminal domain, regulatory subdomain"/>
    <property type="match status" value="1"/>
</dbReference>
<dbReference type="HAMAP" id="MF_00149">
    <property type="entry name" value="DNA_mis_repair"/>
    <property type="match status" value="1"/>
</dbReference>
<dbReference type="InterPro" id="IPR014762">
    <property type="entry name" value="DNA_mismatch_repair_CS"/>
</dbReference>
<dbReference type="InterPro" id="IPR020667">
    <property type="entry name" value="DNA_mismatch_repair_MutL"/>
</dbReference>
<dbReference type="InterPro" id="IPR013507">
    <property type="entry name" value="DNA_mismatch_S5_2-like"/>
</dbReference>
<dbReference type="InterPro" id="IPR036890">
    <property type="entry name" value="HATPase_C_sf"/>
</dbReference>
<dbReference type="InterPro" id="IPR002099">
    <property type="entry name" value="MutL/Mlh/PMS"/>
</dbReference>
<dbReference type="InterPro" id="IPR038973">
    <property type="entry name" value="MutL/Mlh/Pms-like"/>
</dbReference>
<dbReference type="InterPro" id="IPR014790">
    <property type="entry name" value="MutL_C"/>
</dbReference>
<dbReference type="InterPro" id="IPR042120">
    <property type="entry name" value="MutL_C_dimsub"/>
</dbReference>
<dbReference type="InterPro" id="IPR042121">
    <property type="entry name" value="MutL_C_regsub"/>
</dbReference>
<dbReference type="InterPro" id="IPR037198">
    <property type="entry name" value="MutL_C_sf"/>
</dbReference>
<dbReference type="InterPro" id="IPR020568">
    <property type="entry name" value="Ribosomal_Su5_D2-typ_SF"/>
</dbReference>
<dbReference type="InterPro" id="IPR014721">
    <property type="entry name" value="Ribsml_uS5_D2-typ_fold_subgr"/>
</dbReference>
<dbReference type="NCBIfam" id="TIGR00585">
    <property type="entry name" value="mutl"/>
    <property type="match status" value="1"/>
</dbReference>
<dbReference type="NCBIfam" id="NF000953">
    <property type="entry name" value="PRK00095.2-4"/>
    <property type="match status" value="1"/>
</dbReference>
<dbReference type="PANTHER" id="PTHR10073">
    <property type="entry name" value="DNA MISMATCH REPAIR PROTEIN MLH, PMS, MUTL"/>
    <property type="match status" value="1"/>
</dbReference>
<dbReference type="PANTHER" id="PTHR10073:SF12">
    <property type="entry name" value="DNA MISMATCH REPAIR PROTEIN MLH1"/>
    <property type="match status" value="1"/>
</dbReference>
<dbReference type="Pfam" id="PF01119">
    <property type="entry name" value="DNA_mis_repair"/>
    <property type="match status" value="1"/>
</dbReference>
<dbReference type="Pfam" id="PF13589">
    <property type="entry name" value="HATPase_c_3"/>
    <property type="match status" value="1"/>
</dbReference>
<dbReference type="Pfam" id="PF08676">
    <property type="entry name" value="MutL_C"/>
    <property type="match status" value="1"/>
</dbReference>
<dbReference type="SMART" id="SM01340">
    <property type="entry name" value="DNA_mis_repair"/>
    <property type="match status" value="1"/>
</dbReference>
<dbReference type="SMART" id="SM00853">
    <property type="entry name" value="MutL_C"/>
    <property type="match status" value="1"/>
</dbReference>
<dbReference type="SUPFAM" id="SSF55874">
    <property type="entry name" value="ATPase domain of HSP90 chaperone/DNA topoisomerase II/histidine kinase"/>
    <property type="match status" value="1"/>
</dbReference>
<dbReference type="SUPFAM" id="SSF118116">
    <property type="entry name" value="DNA mismatch repair protein MutL"/>
    <property type="match status" value="1"/>
</dbReference>
<dbReference type="SUPFAM" id="SSF54211">
    <property type="entry name" value="Ribosomal protein S5 domain 2-like"/>
    <property type="match status" value="1"/>
</dbReference>
<dbReference type="PROSITE" id="PS00058">
    <property type="entry name" value="DNA_MISMATCH_REPAIR_1"/>
    <property type="match status" value="1"/>
</dbReference>
<proteinExistence type="inferred from homology"/>
<gene>
    <name evidence="1" type="primary">mutL</name>
    <name type="ordered locus">AZC_2393</name>
</gene>
<accession>A8I6D2</accession>
<evidence type="ECO:0000255" key="1">
    <source>
        <dbReference type="HAMAP-Rule" id="MF_00149"/>
    </source>
</evidence>
<comment type="function">
    <text evidence="1">This protein is involved in the repair of mismatches in DNA. It is required for dam-dependent methyl-directed DNA mismatch repair. May act as a 'molecular matchmaker', a protein that promotes the formation of a stable complex between two or more DNA-binding proteins in an ATP-dependent manner without itself being part of a final effector complex.</text>
</comment>
<comment type="similarity">
    <text evidence="1">Belongs to the DNA mismatch repair MutL/HexB family.</text>
</comment>
<protein>
    <recommendedName>
        <fullName evidence="1">DNA mismatch repair protein MutL</fullName>
    </recommendedName>
</protein>
<name>MUTL_AZOC5</name>